<evidence type="ECO:0000250" key="1"/>
<evidence type="ECO:0000256" key="2">
    <source>
        <dbReference type="SAM" id="MobiDB-lite"/>
    </source>
</evidence>
<evidence type="ECO:0000305" key="3"/>
<comment type="subcellular location">
    <subcellularLocation>
        <location evidence="3">Nucleus</location>
    </subcellularLocation>
</comment>
<comment type="similarity">
    <text evidence="3">Belongs to the HSF family.</text>
</comment>
<proteinExistence type="inferred from homology"/>
<reference key="1">
    <citation type="submission" date="1994-04" db="EMBL/GenBank/DDBJ databases">
        <authorList>
            <person name="Wada H."/>
        </authorList>
    </citation>
    <scope>NUCLEOTIDE SEQUENCE [GENOMIC DNA]</scope>
    <source>
        <strain>D416-1-4</strain>
    </source>
</reference>
<reference key="2">
    <citation type="journal article" date="1997" name="Yeast">
        <title>Analysis of a 17.9 kb region from Saccharomyces cerevisiae chromosome VII reveals the presence of eight open reading frames, including BRF1 (TFIIIB70) and GCN5 genes.</title>
        <authorList>
            <person name="Feroli F."/>
            <person name="Carignani G."/>
            <person name="Pavanello A."/>
            <person name="Guerreiro P."/>
            <person name="Azevedo D."/>
            <person name="Rodrigues-Pousada C."/>
            <person name="Melchioretto P."/>
            <person name="Panzeri L."/>
            <person name="Agostoni Carbone M.L."/>
        </authorList>
    </citation>
    <scope>NUCLEOTIDE SEQUENCE [GENOMIC DNA]</scope>
    <source>
        <strain>ATCC 96604 / S288c / FY1679</strain>
    </source>
</reference>
<reference key="3">
    <citation type="journal article" date="1997" name="Nature">
        <title>The nucleotide sequence of Saccharomyces cerevisiae chromosome VII.</title>
        <authorList>
            <person name="Tettelin H."/>
            <person name="Agostoni-Carbone M.L."/>
            <person name="Albermann K."/>
            <person name="Albers M."/>
            <person name="Arroyo J."/>
            <person name="Backes U."/>
            <person name="Barreiros T."/>
            <person name="Bertani I."/>
            <person name="Bjourson A.J."/>
            <person name="Brueckner M."/>
            <person name="Bruschi C.V."/>
            <person name="Carignani G."/>
            <person name="Castagnoli L."/>
            <person name="Cerdan E."/>
            <person name="Clemente M.L."/>
            <person name="Coblenz A."/>
            <person name="Coglievina M."/>
            <person name="Coissac E."/>
            <person name="Defoor E."/>
            <person name="Del Bino S."/>
            <person name="Delius H."/>
            <person name="Delneri D."/>
            <person name="de Wergifosse P."/>
            <person name="Dujon B."/>
            <person name="Durand P."/>
            <person name="Entian K.-D."/>
            <person name="Eraso P."/>
            <person name="Escribano V."/>
            <person name="Fabiani L."/>
            <person name="Fartmann B."/>
            <person name="Feroli F."/>
            <person name="Feuermann M."/>
            <person name="Frontali L."/>
            <person name="Garcia-Gonzalez M."/>
            <person name="Garcia-Saez M.I."/>
            <person name="Goffeau A."/>
            <person name="Guerreiro P."/>
            <person name="Hani J."/>
            <person name="Hansen M."/>
            <person name="Hebling U."/>
            <person name="Hernandez K."/>
            <person name="Heumann K."/>
            <person name="Hilger F."/>
            <person name="Hofmann B."/>
            <person name="Indge K.J."/>
            <person name="James C.M."/>
            <person name="Klima R."/>
            <person name="Koetter P."/>
            <person name="Kramer B."/>
            <person name="Kramer W."/>
            <person name="Lauquin G."/>
            <person name="Leuther H."/>
            <person name="Louis E.J."/>
            <person name="Maillier E."/>
            <person name="Marconi A."/>
            <person name="Martegani E."/>
            <person name="Mazon M.J."/>
            <person name="Mazzoni C."/>
            <person name="McReynolds A.D.K."/>
            <person name="Melchioretto P."/>
            <person name="Mewes H.-W."/>
            <person name="Minenkova O."/>
            <person name="Mueller-Auer S."/>
            <person name="Nawrocki A."/>
            <person name="Netter P."/>
            <person name="Neu R."/>
            <person name="Nombela C."/>
            <person name="Oliver S.G."/>
            <person name="Panzeri L."/>
            <person name="Paoluzi S."/>
            <person name="Plevani P."/>
            <person name="Portetelle D."/>
            <person name="Portillo F."/>
            <person name="Potier S."/>
            <person name="Purnelle B."/>
            <person name="Rieger M."/>
            <person name="Riles L."/>
            <person name="Rinaldi T."/>
            <person name="Robben J."/>
            <person name="Rodrigues-Pousada C."/>
            <person name="Rodriguez-Belmonte E."/>
            <person name="Rodriguez-Torres A.M."/>
            <person name="Rose M."/>
            <person name="Ruzzi M."/>
            <person name="Saliola M."/>
            <person name="Sanchez-Perez M."/>
            <person name="Schaefer B."/>
            <person name="Schaefer M."/>
            <person name="Scharfe M."/>
            <person name="Schmidheini T."/>
            <person name="Schreer A."/>
            <person name="Skala J."/>
            <person name="Souciet J.-L."/>
            <person name="Steensma H.Y."/>
            <person name="Talla E."/>
            <person name="Thierry A."/>
            <person name="Vandenbol M."/>
            <person name="van der Aart Q.J.M."/>
            <person name="Van Dyck L."/>
            <person name="Vanoni M."/>
            <person name="Verhasselt P."/>
            <person name="Voet M."/>
            <person name="Volckaert G."/>
            <person name="Wambutt R."/>
            <person name="Watson M.D."/>
            <person name="Weber N."/>
            <person name="Wedler E."/>
            <person name="Wedler H."/>
            <person name="Wipfli P."/>
            <person name="Wolf K."/>
            <person name="Wright L.F."/>
            <person name="Zaccaria P."/>
            <person name="Zimmermann M."/>
            <person name="Zollner A."/>
            <person name="Kleine K."/>
        </authorList>
    </citation>
    <scope>NUCLEOTIDE SEQUENCE [LARGE SCALE GENOMIC DNA]</scope>
    <source>
        <strain>ATCC 204508 / S288c</strain>
    </source>
</reference>
<reference key="4">
    <citation type="journal article" date="2014" name="G3 (Bethesda)">
        <title>The reference genome sequence of Saccharomyces cerevisiae: Then and now.</title>
        <authorList>
            <person name="Engel S.R."/>
            <person name="Dietrich F.S."/>
            <person name="Fisk D.G."/>
            <person name="Binkley G."/>
            <person name="Balakrishnan R."/>
            <person name="Costanzo M.C."/>
            <person name="Dwight S.S."/>
            <person name="Hitz B.C."/>
            <person name="Karra K."/>
            <person name="Nash R.S."/>
            <person name="Weng S."/>
            <person name="Wong E.D."/>
            <person name="Lloyd P."/>
            <person name="Skrzypek M.S."/>
            <person name="Miyasato S.R."/>
            <person name="Simison M."/>
            <person name="Cherry J.M."/>
        </authorList>
    </citation>
    <scope>GENOME REANNOTATION</scope>
    <source>
        <strain>ATCC 204508 / S288c</strain>
    </source>
</reference>
<sequence>MQPKTFVHQLHAILLEPEVNKWIYWSPTDNTVFFLKPYDPNFSTHVLKRYFKHGNVNSFVRQLHMYGFHKLSHPSPDQSSANNGNVKELVEWKFTHPSGFFFKEANAGILNKIQRKSTGVGKDGKRKNILSPISVSYVDASRLNVLSQQSGPVSAREPSNMFMGSPVHYSTSQSPPHISIPQQQQSSGPYLISSLPPQQPTVNMMRRQSISARMMNSYDYPNQFSTQDSIVQPQQPQQVLSPQALSGPPMKKSGTLSSTDDLKTTSLPIVNYPMPYHPGAFAQQQQQQQQPLPTVPPYSSYSTPFPSMMNSLSNSASNSPALGVCNNNVTLPKKSNISERQALDNHIQTLKNSLSTITDLIEKHINSASQDENKTLTNDAMNKDLRTSLSLLQNSKEEIIQLESKWMSMQSVKTTALPLQETTNTSSTLTSLTSSIIPKSIPIITKGEVATKPASY</sequence>
<gene>
    <name type="primary">MGA1</name>
    <name type="ordered locus">YGR249W</name>
</gene>
<keyword id="KW-0238">DNA-binding</keyword>
<keyword id="KW-0539">Nucleus</keyword>
<keyword id="KW-1185">Reference proteome</keyword>
<feature type="chain" id="PRO_0000124593" description="Protein MGA1">
    <location>
        <begin position="1"/>
        <end position="456"/>
    </location>
</feature>
<feature type="DNA-binding region" evidence="1">
    <location>
        <begin position="3"/>
        <end position="118"/>
    </location>
</feature>
<feature type="region of interest" description="Disordered" evidence="2">
    <location>
        <begin position="229"/>
        <end position="299"/>
    </location>
</feature>
<feature type="compositionally biased region" description="Low complexity" evidence="2">
    <location>
        <begin position="231"/>
        <end position="246"/>
    </location>
</feature>
<feature type="compositionally biased region" description="Low complexity" evidence="2">
    <location>
        <begin position="253"/>
        <end position="267"/>
    </location>
</feature>
<feature type="compositionally biased region" description="Low complexity" evidence="2">
    <location>
        <begin position="283"/>
        <end position="299"/>
    </location>
</feature>
<accession>P53050</accession>
<accession>D6VV29</accession>
<organism>
    <name type="scientific">Saccharomyces cerevisiae (strain ATCC 204508 / S288c)</name>
    <name type="common">Baker's yeast</name>
    <dbReference type="NCBI Taxonomy" id="559292"/>
    <lineage>
        <taxon>Eukaryota</taxon>
        <taxon>Fungi</taxon>
        <taxon>Dikarya</taxon>
        <taxon>Ascomycota</taxon>
        <taxon>Saccharomycotina</taxon>
        <taxon>Saccharomycetes</taxon>
        <taxon>Saccharomycetales</taxon>
        <taxon>Saccharomycetaceae</taxon>
        <taxon>Saccharomyces</taxon>
    </lineage>
</organism>
<protein>
    <recommendedName>
        <fullName>Protein MGA1</fullName>
    </recommendedName>
</protein>
<dbReference type="EMBL" id="D29626">
    <property type="protein sequence ID" value="BAA06105.1"/>
    <property type="molecule type" value="Genomic_DNA"/>
</dbReference>
<dbReference type="EMBL" id="Y07703">
    <property type="protein sequence ID" value="CAA68970.1"/>
    <property type="molecule type" value="Genomic_DNA"/>
</dbReference>
<dbReference type="EMBL" id="Z73034">
    <property type="protein sequence ID" value="CAA97278.1"/>
    <property type="molecule type" value="Genomic_DNA"/>
</dbReference>
<dbReference type="EMBL" id="BK006941">
    <property type="protein sequence ID" value="DAA08340.1"/>
    <property type="molecule type" value="Genomic_DNA"/>
</dbReference>
<dbReference type="PIR" id="S47924">
    <property type="entry name" value="S47924"/>
</dbReference>
<dbReference type="RefSeq" id="NP_011765.1">
    <property type="nucleotide sequence ID" value="NM_001181378.1"/>
</dbReference>
<dbReference type="SMR" id="P53050"/>
<dbReference type="BioGRID" id="33500">
    <property type="interactions" value="70"/>
</dbReference>
<dbReference type="DIP" id="DIP-4232N"/>
<dbReference type="FunCoup" id="P53050">
    <property type="interactions" value="982"/>
</dbReference>
<dbReference type="IntAct" id="P53050">
    <property type="interactions" value="4"/>
</dbReference>
<dbReference type="STRING" id="4932.YGR249W"/>
<dbReference type="GlyGen" id="P53050">
    <property type="glycosylation" value="1 site"/>
</dbReference>
<dbReference type="iPTMnet" id="P53050"/>
<dbReference type="PaxDb" id="4932-YGR249W"/>
<dbReference type="PeptideAtlas" id="P53050"/>
<dbReference type="EnsemblFungi" id="YGR249W_mRNA">
    <property type="protein sequence ID" value="YGR249W"/>
    <property type="gene ID" value="YGR249W"/>
</dbReference>
<dbReference type="GeneID" id="853164"/>
<dbReference type="KEGG" id="sce:YGR249W"/>
<dbReference type="AGR" id="SGD:S000003481"/>
<dbReference type="SGD" id="S000003481">
    <property type="gene designation" value="MGA1"/>
</dbReference>
<dbReference type="VEuPathDB" id="FungiDB:YGR249W"/>
<dbReference type="eggNOG" id="KOG0627">
    <property type="taxonomic scope" value="Eukaryota"/>
</dbReference>
<dbReference type="HOGENOM" id="CLU_034478_1_0_1"/>
<dbReference type="InParanoid" id="P53050"/>
<dbReference type="OMA" id="QLESKWM"/>
<dbReference type="OrthoDB" id="60033at2759"/>
<dbReference type="BioCyc" id="YEAST:G3O-30922-MONOMER"/>
<dbReference type="BioGRID-ORCS" id="853164">
    <property type="hits" value="6 hits in 13 CRISPR screens"/>
</dbReference>
<dbReference type="PRO" id="PR:P53050"/>
<dbReference type="Proteomes" id="UP000002311">
    <property type="component" value="Chromosome VII"/>
</dbReference>
<dbReference type="RNAct" id="P53050">
    <property type="molecule type" value="protein"/>
</dbReference>
<dbReference type="GO" id="GO:0000785">
    <property type="term" value="C:chromatin"/>
    <property type="evidence" value="ECO:0000314"/>
    <property type="project" value="SGD"/>
</dbReference>
<dbReference type="GO" id="GO:0005634">
    <property type="term" value="C:nucleus"/>
    <property type="evidence" value="ECO:0007669"/>
    <property type="project" value="UniProtKB-SubCell"/>
</dbReference>
<dbReference type="GO" id="GO:0003700">
    <property type="term" value="F:DNA-binding transcription factor activity"/>
    <property type="evidence" value="ECO:0007669"/>
    <property type="project" value="InterPro"/>
</dbReference>
<dbReference type="GO" id="GO:0043565">
    <property type="term" value="F:sequence-specific DNA binding"/>
    <property type="evidence" value="ECO:0007669"/>
    <property type="project" value="InterPro"/>
</dbReference>
<dbReference type="GO" id="GO:0007124">
    <property type="term" value="P:pseudohyphal growth"/>
    <property type="evidence" value="ECO:0000315"/>
    <property type="project" value="SGD"/>
</dbReference>
<dbReference type="FunFam" id="1.10.10.10:FF:000708">
    <property type="entry name" value="Transcription factor SFL2"/>
    <property type="match status" value="1"/>
</dbReference>
<dbReference type="Gene3D" id="1.10.10.10">
    <property type="entry name" value="Winged helix-like DNA-binding domain superfamily/Winged helix DNA-binding domain"/>
    <property type="match status" value="1"/>
</dbReference>
<dbReference type="InterPro" id="IPR000232">
    <property type="entry name" value="HSF_DNA-bd"/>
</dbReference>
<dbReference type="InterPro" id="IPR036388">
    <property type="entry name" value="WH-like_DNA-bd_sf"/>
</dbReference>
<dbReference type="InterPro" id="IPR036390">
    <property type="entry name" value="WH_DNA-bd_sf"/>
</dbReference>
<dbReference type="PANTHER" id="PTHR10015">
    <property type="entry name" value="HEAT SHOCK TRANSCRIPTION FACTOR"/>
    <property type="match status" value="1"/>
</dbReference>
<dbReference type="PANTHER" id="PTHR10015:SF409">
    <property type="entry name" value="PROTEIN MGA1"/>
    <property type="match status" value="1"/>
</dbReference>
<dbReference type="Pfam" id="PF00447">
    <property type="entry name" value="HSF_DNA-bind"/>
    <property type="match status" value="1"/>
</dbReference>
<dbReference type="PRINTS" id="PR00056">
    <property type="entry name" value="HSFDOMAIN"/>
</dbReference>
<dbReference type="SMART" id="SM00415">
    <property type="entry name" value="HSF"/>
    <property type="match status" value="1"/>
</dbReference>
<dbReference type="SUPFAM" id="SSF46785">
    <property type="entry name" value="Winged helix' DNA-binding domain"/>
    <property type="match status" value="1"/>
</dbReference>
<dbReference type="PROSITE" id="PS00434">
    <property type="entry name" value="HSF_DOMAIN"/>
    <property type="match status" value="1"/>
</dbReference>
<name>MGA1_YEAST</name>